<proteinExistence type="inferred from homology"/>
<evidence type="ECO:0000250" key="1">
    <source>
        <dbReference type="UniProtKB" id="P64596"/>
    </source>
</evidence>
<evidence type="ECO:0000255" key="2">
    <source>
        <dbReference type="PROSITE-ProRule" id="PRU00229"/>
    </source>
</evidence>
<evidence type="ECO:0000255" key="3">
    <source>
        <dbReference type="PROSITE-ProRule" id="PRU00303"/>
    </source>
</evidence>
<evidence type="ECO:0000305" key="4"/>
<keyword id="KW-0998">Cell outer membrane</keyword>
<keyword id="KW-0449">Lipoprotein</keyword>
<keyword id="KW-0472">Membrane</keyword>
<keyword id="KW-0564">Palmitate</keyword>
<keyword id="KW-1185">Reference proteome</keyword>
<keyword id="KW-0677">Repeat</keyword>
<keyword id="KW-0732">Signal</keyword>
<accession>P64597</accession>
<accession>P45467</accession>
<name>DOLP_ECOL6</name>
<protein>
    <recommendedName>
        <fullName evidence="1">Outer membrane lipoprotein DolP</fullName>
    </recommendedName>
</protein>
<sequence>MKALSPIAVLISALLLQGCVAAAVVGTAAVGTKAATDPRSVGTQVDDGTLEVRVNSALSKDEQIKKEARINVTAYQGKVLLVGQSPNAELSARAKQIAMGVDGANEVYNEIRQGQPIGLGEASNDTWITTKVRSQLLTSDLVKSSNVKVTTENGEVFLMGLVTEREAKAAADIASRVSGVKRVTTAFTFIK</sequence>
<feature type="signal peptide" evidence="3">
    <location>
        <begin position="1"/>
        <end position="18"/>
    </location>
</feature>
<feature type="chain" id="PRO_0000013910" description="Outer membrane lipoprotein DolP">
    <location>
        <begin position="19"/>
        <end position="191"/>
    </location>
</feature>
<feature type="domain" description="BON 1" evidence="2">
    <location>
        <begin position="46"/>
        <end position="115"/>
    </location>
</feature>
<feature type="domain" description="BON 2" evidence="2">
    <location>
        <begin position="124"/>
        <end position="191"/>
    </location>
</feature>
<feature type="lipid moiety-binding region" description="N-palmitoyl cysteine" evidence="3">
    <location>
        <position position="19"/>
    </location>
</feature>
<feature type="lipid moiety-binding region" description="S-diacylglycerol cysteine" evidence="3">
    <location>
        <position position="19"/>
    </location>
</feature>
<reference key="1">
    <citation type="journal article" date="2002" name="Proc. Natl. Acad. Sci. U.S.A.">
        <title>Extensive mosaic structure revealed by the complete genome sequence of uropathogenic Escherichia coli.</title>
        <authorList>
            <person name="Welch R.A."/>
            <person name="Burland V."/>
            <person name="Plunkett G. III"/>
            <person name="Redford P."/>
            <person name="Roesch P."/>
            <person name="Rasko D."/>
            <person name="Buckles E.L."/>
            <person name="Liou S.-R."/>
            <person name="Boutin A."/>
            <person name="Hackett J."/>
            <person name="Stroud D."/>
            <person name="Mayhew G.F."/>
            <person name="Rose D.J."/>
            <person name="Zhou S."/>
            <person name="Schwartz D.C."/>
            <person name="Perna N.T."/>
            <person name="Mobley H.L.T."/>
            <person name="Donnenberg M.S."/>
            <person name="Blattner F.R."/>
        </authorList>
    </citation>
    <scope>NUCLEOTIDE SEQUENCE [LARGE SCALE GENOMIC DNA]</scope>
    <source>
        <strain>CFT073 / ATCC 700928 / UPEC</strain>
    </source>
</reference>
<gene>
    <name evidence="1" type="primary">dolP</name>
    <name type="synonym">yraP</name>
    <name type="ordered locus">c3904</name>
</gene>
<dbReference type="EMBL" id="AE014075">
    <property type="protein sequence ID" value="AAN82345.1"/>
    <property type="molecule type" value="Genomic_DNA"/>
</dbReference>
<dbReference type="RefSeq" id="WP_000646033.1">
    <property type="nucleotide sequence ID" value="NZ_CP051263.1"/>
</dbReference>
<dbReference type="SMR" id="P64597"/>
<dbReference type="STRING" id="199310.c3904"/>
<dbReference type="GeneID" id="86861296"/>
<dbReference type="KEGG" id="ecc:c3904"/>
<dbReference type="eggNOG" id="COG2823">
    <property type="taxonomic scope" value="Bacteria"/>
</dbReference>
<dbReference type="HOGENOM" id="CLU_083606_3_0_6"/>
<dbReference type="BioCyc" id="ECOL199310:C3904-MONOMER"/>
<dbReference type="Proteomes" id="UP000001410">
    <property type="component" value="Chromosome"/>
</dbReference>
<dbReference type="GO" id="GO:0009279">
    <property type="term" value="C:cell outer membrane"/>
    <property type="evidence" value="ECO:0007669"/>
    <property type="project" value="UniProtKB-SubCell"/>
</dbReference>
<dbReference type="Gene3D" id="3.30.1340.30">
    <property type="match status" value="1"/>
</dbReference>
<dbReference type="InterPro" id="IPR007055">
    <property type="entry name" value="BON_dom"/>
</dbReference>
<dbReference type="InterPro" id="IPR051686">
    <property type="entry name" value="Lipoprotein_DolP"/>
</dbReference>
<dbReference type="InterPro" id="IPR014004">
    <property type="entry name" value="Transpt-assoc_nodulatn_dom_bac"/>
</dbReference>
<dbReference type="NCBIfam" id="NF008247">
    <property type="entry name" value="PRK11023.1"/>
    <property type="match status" value="1"/>
</dbReference>
<dbReference type="PANTHER" id="PTHR34606">
    <property type="entry name" value="BON DOMAIN-CONTAINING PROTEIN"/>
    <property type="match status" value="1"/>
</dbReference>
<dbReference type="PANTHER" id="PTHR34606:SF4">
    <property type="entry name" value="OUTER MEMBRANE LIPOPROTEIN DOLP"/>
    <property type="match status" value="1"/>
</dbReference>
<dbReference type="Pfam" id="PF04972">
    <property type="entry name" value="BON"/>
    <property type="match status" value="2"/>
</dbReference>
<dbReference type="SMART" id="SM00749">
    <property type="entry name" value="BON"/>
    <property type="match status" value="2"/>
</dbReference>
<dbReference type="PROSITE" id="PS50914">
    <property type="entry name" value="BON"/>
    <property type="match status" value="2"/>
</dbReference>
<dbReference type="PROSITE" id="PS51257">
    <property type="entry name" value="PROKAR_LIPOPROTEIN"/>
    <property type="match status" value="1"/>
</dbReference>
<comment type="function">
    <text evidence="1">Plays an important role in maintaining outer membrane integrity.</text>
</comment>
<comment type="subcellular location">
    <subcellularLocation>
        <location evidence="1">Cell outer membrane</location>
        <topology evidence="1">Lipid-anchor</topology>
        <orientation evidence="1">Periplasmic side</orientation>
    </subcellularLocation>
</comment>
<comment type="similarity">
    <text evidence="4">Belongs to the lipoprotein DolP family.</text>
</comment>
<organism>
    <name type="scientific">Escherichia coli O6:H1 (strain CFT073 / ATCC 700928 / UPEC)</name>
    <dbReference type="NCBI Taxonomy" id="199310"/>
    <lineage>
        <taxon>Bacteria</taxon>
        <taxon>Pseudomonadati</taxon>
        <taxon>Pseudomonadota</taxon>
        <taxon>Gammaproteobacteria</taxon>
        <taxon>Enterobacterales</taxon>
        <taxon>Enterobacteriaceae</taxon>
        <taxon>Escherichia</taxon>
    </lineage>
</organism>